<gene>
    <name evidence="2" type="primary">PA</name>
</gene>
<protein>
    <recommendedName>
        <fullName evidence="2">Polymerase acidic protein</fullName>
        <ecNumber evidence="2">3.1.-.-</ecNumber>
    </recommendedName>
    <alternativeName>
        <fullName evidence="2">RNA-directed RNA polymerase subunit P2</fullName>
    </alternativeName>
</protein>
<reference key="1">
    <citation type="journal article" date="2006" name="Science">
        <title>Large-scale sequence analysis of avian influenza isolates.</title>
        <authorList>
            <person name="Obenauer J.C."/>
            <person name="Denson J."/>
            <person name="Mehta P.K."/>
            <person name="Su X."/>
            <person name="Mukatira S."/>
            <person name="Finkelstein D.B."/>
            <person name="Xu X."/>
            <person name="Wang J."/>
            <person name="Ma J."/>
            <person name="Fan Y."/>
            <person name="Rakestraw K.M."/>
            <person name="Webster R.G."/>
            <person name="Hoffmann E."/>
            <person name="Krauss S."/>
            <person name="Zheng J."/>
            <person name="Zhang Z."/>
            <person name="Naeve C.W."/>
        </authorList>
    </citation>
    <scope>NUCLEOTIDE SEQUENCE [GENOMIC RNA]</scope>
</reference>
<accession>Q20PL7</accession>
<feature type="chain" id="PRO_0000279247" description="Polymerase acidic protein">
    <location>
        <begin position="1"/>
        <end position="716"/>
    </location>
</feature>
<feature type="short sequence motif" description="Nuclear localization signal 1 (NLS1)" evidence="1 2">
    <location>
        <begin position="124"/>
        <end position="139"/>
    </location>
</feature>
<feature type="short sequence motif" description="Nuclear localization signal 2 (NLS2)" evidence="1 2">
    <location>
        <begin position="184"/>
        <end position="247"/>
    </location>
</feature>
<feature type="binding site" evidence="2">
    <location>
        <position position="41"/>
    </location>
    <ligand>
        <name>Mn(2+)</name>
        <dbReference type="ChEBI" id="CHEBI:29035"/>
        <label>1</label>
    </ligand>
</feature>
<feature type="binding site" evidence="2">
    <location>
        <position position="80"/>
    </location>
    <ligand>
        <name>Mn(2+)</name>
        <dbReference type="ChEBI" id="CHEBI:29035"/>
        <label>2</label>
    </ligand>
</feature>
<feature type="binding site" evidence="2">
    <location>
        <position position="108"/>
    </location>
    <ligand>
        <name>Mn(2+)</name>
        <dbReference type="ChEBI" id="CHEBI:29035"/>
        <label>1</label>
    </ligand>
</feature>
<feature type="binding site" evidence="2">
    <location>
        <position position="108"/>
    </location>
    <ligand>
        <name>Mn(2+)</name>
        <dbReference type="ChEBI" id="CHEBI:29035"/>
        <label>2</label>
    </ligand>
</feature>
<feature type="binding site" evidence="2">
    <location>
        <position position="119"/>
    </location>
    <ligand>
        <name>Mn(2+)</name>
        <dbReference type="ChEBI" id="CHEBI:29035"/>
        <label>1</label>
    </ligand>
</feature>
<feature type="binding site" evidence="2">
    <location>
        <position position="120"/>
    </location>
    <ligand>
        <name>Mn(2+)</name>
        <dbReference type="ChEBI" id="CHEBI:29035"/>
        <label>1</label>
    </ligand>
</feature>
<organism>
    <name type="scientific">Influenza A virus (strain A/Grey teal/Australia/2/1979 H4N4)</name>
    <dbReference type="NCBI Taxonomy" id="402464"/>
    <lineage>
        <taxon>Viruses</taxon>
        <taxon>Riboviria</taxon>
        <taxon>Orthornavirae</taxon>
        <taxon>Negarnaviricota</taxon>
        <taxon>Polyploviricotina</taxon>
        <taxon>Insthoviricetes</taxon>
        <taxon>Articulavirales</taxon>
        <taxon>Orthomyxoviridae</taxon>
        <taxon>Alphainfluenzavirus</taxon>
        <taxon>Alphainfluenzavirus influenzae</taxon>
        <taxon>Influenza A virus</taxon>
    </lineage>
</organism>
<name>PA_I79A7</name>
<proteinExistence type="inferred from homology"/>
<comment type="function">
    <text evidence="2">Plays an essential role in viral RNA transcription and replication by forming the heterotrimeric polymerase complex together with PB1 and PB2 subunits. The complex transcribes viral mRNAs by using a unique mechanism called cap-snatching. It consists in the hijacking and cleavage of host capped pre-mRNAs. These short capped RNAs are then used as primers for viral mRNAs. The PB2 subunit is responsible for the binding of the 5' cap of cellular pre-mRNAs which are subsequently cleaved after 10-13 nucleotides by the PA subunit that carries the endonuclease activity.</text>
</comment>
<comment type="cofactor">
    <cofactor evidence="2">
        <name>Mn(2+)</name>
        <dbReference type="ChEBI" id="CHEBI:29035"/>
    </cofactor>
    <text evidence="2">Binds 2 manganese ions per subunit.</text>
</comment>
<comment type="subunit">
    <text evidence="1 2">Influenza RNA polymerase is composed of three subunits: PB1, PB2 and PA. Interacts (via C-terminus) with PB1 (via N-terminus).</text>
</comment>
<comment type="subcellular location">
    <subcellularLocation>
        <location evidence="2">Host cytoplasm</location>
    </subcellularLocation>
    <subcellularLocation>
        <location evidence="2">Host nucleus</location>
    </subcellularLocation>
    <text evidence="1 2">PB1 and PA are transported in the host nucleus as a complex.</text>
</comment>
<comment type="alternative products">
    <event type="ribosomal frameshifting"/>
    <isoform>
        <id>Q20PL7-1</id>
        <name>PA</name>
        <sequence type="displayed"/>
    </isoform>
    <isoform>
        <id>P0CK91-1</id>
        <name>PA-X</name>
        <sequence type="external"/>
    </isoform>
</comment>
<comment type="PTM">
    <text evidence="1 2">Phosphorylated on serines and threonines by host kinases, including human casein kinase II.</text>
</comment>
<comment type="similarity">
    <text evidence="2">Belongs to the influenza viruses PA family.</text>
</comment>
<dbReference type="EC" id="3.1.-.-" evidence="2"/>
<dbReference type="EMBL" id="CY005676">
    <property type="protein sequence ID" value="ABB20368.1"/>
    <property type="molecule type" value="Genomic_RNA"/>
</dbReference>
<dbReference type="SMR" id="Q20PL7"/>
<dbReference type="Proteomes" id="UP000008575">
    <property type="component" value="Genome"/>
</dbReference>
<dbReference type="GO" id="GO:0030430">
    <property type="term" value="C:host cell cytoplasm"/>
    <property type="evidence" value="ECO:0007669"/>
    <property type="project" value="UniProtKB-SubCell"/>
</dbReference>
<dbReference type="GO" id="GO:0042025">
    <property type="term" value="C:host cell nucleus"/>
    <property type="evidence" value="ECO:0007669"/>
    <property type="project" value="UniProtKB-SubCell"/>
</dbReference>
<dbReference type="GO" id="GO:0004519">
    <property type="term" value="F:endonuclease activity"/>
    <property type="evidence" value="ECO:0007669"/>
    <property type="project" value="UniProtKB-KW"/>
</dbReference>
<dbReference type="GO" id="GO:0046872">
    <property type="term" value="F:metal ion binding"/>
    <property type="evidence" value="ECO:0007669"/>
    <property type="project" value="UniProtKB-KW"/>
</dbReference>
<dbReference type="GO" id="GO:0003723">
    <property type="term" value="F:RNA binding"/>
    <property type="evidence" value="ECO:0007669"/>
    <property type="project" value="UniProtKB-UniRule"/>
</dbReference>
<dbReference type="GO" id="GO:0075526">
    <property type="term" value="P:cap snatching"/>
    <property type="evidence" value="ECO:0007669"/>
    <property type="project" value="UniProtKB-UniRule"/>
</dbReference>
<dbReference type="GO" id="GO:0006351">
    <property type="term" value="P:DNA-templated transcription"/>
    <property type="evidence" value="ECO:0007669"/>
    <property type="project" value="UniProtKB-UniRule"/>
</dbReference>
<dbReference type="GO" id="GO:0039657">
    <property type="term" value="P:symbiont-mediated suppression of host gene expression"/>
    <property type="evidence" value="ECO:0007669"/>
    <property type="project" value="UniProtKB-KW"/>
</dbReference>
<dbReference type="GO" id="GO:0039523">
    <property type="term" value="P:symbiont-mediated suppression of host mRNA transcription via inhibition of RNA polymerase II activity"/>
    <property type="evidence" value="ECO:0007669"/>
    <property type="project" value="UniProtKB-UniRule"/>
</dbReference>
<dbReference type="GO" id="GO:0039694">
    <property type="term" value="P:viral RNA genome replication"/>
    <property type="evidence" value="ECO:0007669"/>
    <property type="project" value="InterPro"/>
</dbReference>
<dbReference type="GO" id="GO:0075523">
    <property type="term" value="P:viral translational frameshifting"/>
    <property type="evidence" value="ECO:0007669"/>
    <property type="project" value="UniProtKB-KW"/>
</dbReference>
<dbReference type="FunFam" id="3.40.91.90:FF:000001">
    <property type="entry name" value="Polymerase acidic protein"/>
    <property type="match status" value="1"/>
</dbReference>
<dbReference type="Gene3D" id="3.40.91.90">
    <property type="entry name" value="Influenza RNA-dependent RNA polymerase subunit PA, endonuclease domain"/>
    <property type="match status" value="1"/>
</dbReference>
<dbReference type="HAMAP" id="MF_04063">
    <property type="entry name" value="INFV_PA"/>
    <property type="match status" value="1"/>
</dbReference>
<dbReference type="InterPro" id="IPR037534">
    <property type="entry name" value="INFV_PA"/>
</dbReference>
<dbReference type="InterPro" id="IPR001009">
    <property type="entry name" value="PA/PA-X"/>
</dbReference>
<dbReference type="InterPro" id="IPR038372">
    <property type="entry name" value="PA/PA-X_sf"/>
</dbReference>
<dbReference type="Pfam" id="PF00603">
    <property type="entry name" value="Flu_PA"/>
    <property type="match status" value="1"/>
</dbReference>
<organismHost>
    <name type="scientific">Aves</name>
    <dbReference type="NCBI Taxonomy" id="8782"/>
</organismHost>
<evidence type="ECO:0000250" key="1">
    <source>
        <dbReference type="UniProtKB" id="P03433"/>
    </source>
</evidence>
<evidence type="ECO:0000255" key="2">
    <source>
        <dbReference type="HAMAP-Rule" id="MF_04063"/>
    </source>
</evidence>
<keyword id="KW-1157">Cap snatching</keyword>
<keyword id="KW-0255">Endonuclease</keyword>
<keyword id="KW-1262">Eukaryotic host gene expression shutoff by virus</keyword>
<keyword id="KW-1191">Eukaryotic host transcription shutoff by virus</keyword>
<keyword id="KW-1035">Host cytoplasm</keyword>
<keyword id="KW-1190">Host gene expression shutoff by virus</keyword>
<keyword id="KW-1048">Host nucleus</keyword>
<keyword id="KW-0945">Host-virus interaction</keyword>
<keyword id="KW-0378">Hydrolase</keyword>
<keyword id="KW-1104">Inhibition of host RNA polymerase II by virus</keyword>
<keyword id="KW-0464">Manganese</keyword>
<keyword id="KW-0479">Metal-binding</keyword>
<keyword id="KW-0540">Nuclease</keyword>
<keyword id="KW-0597">Phosphoprotein</keyword>
<keyword id="KW-0688">Ribosomal frameshifting</keyword>
<sequence>MEDFVRQCFNPMIVELAEKAMKEYGEDPKIETNKFAAICTHLEVCFMYSDFHFIDERGESIIVESGDPNALLKHRFEIIEGRDRTMAWTVVNSICNTTGVEKPKFLPDLYDYKENRFIEIGVTRREVHIYYLEKANKIKSEKTHIHIFSFTGEEMATKADYTLDEESRARIKTRLFTIRQEMASRGLWDSFRQSERGEETIEERFEITGTMRRLADQSLPPNFSSLENFRAYVDGFEPNGCIEGKLSQMSKEVNARIEPFLKTTPRPLRLPDGPPCCQRSKFLLMDALKLSIEDPSHEGEGIPLYDAIKCMKTFFGWKEPNIVKPHEKGINPNYLLAWKQVLAELQDIENEEKIPKTKNMKKTSQLKWALGENMAPEKVDFEDCKDVSDLKQYDSDEPEPRSLASWIQSEFNKACELTDSSWIELDEIGEDVAPIEHIAGMRRNYFTAEVSHCRATEYIMKGVYINTALLNASCAAMDDFQLIPMISKCRTKEGRRKTNLYGFIIKGRSHLRNDTDVVNFVSMEFSLTDPRLEPHKWEKYCVLEIGDMILRTAIGQVSRPMFLYVRTNGTSKIKMKWGMEMRRCLLQSLQQIESMIEAESSVKEKDMTKEFFENKSETWPIGESPKGVEEGSIGKVCRTLLAKSVFNSLYASPQLEGFSAESRKLLLIVQALRDNLEPGTFDLGGLYEAIEECLINDPWVLLNASWFNSFLTHALK</sequence>